<proteinExistence type="inferred from homology"/>
<reference key="1">
    <citation type="journal article" date="2004" name="Proc. Natl. Acad. Sci. U.S.A.">
        <title>Structural flexibility in the Burkholderia mallei genome.</title>
        <authorList>
            <person name="Nierman W.C."/>
            <person name="DeShazer D."/>
            <person name="Kim H.S."/>
            <person name="Tettelin H."/>
            <person name="Nelson K.E."/>
            <person name="Feldblyum T.V."/>
            <person name="Ulrich R.L."/>
            <person name="Ronning C.M."/>
            <person name="Brinkac L.M."/>
            <person name="Daugherty S.C."/>
            <person name="Davidsen T.D."/>
            <person name="DeBoy R.T."/>
            <person name="Dimitrov G."/>
            <person name="Dodson R.J."/>
            <person name="Durkin A.S."/>
            <person name="Gwinn M.L."/>
            <person name="Haft D.H."/>
            <person name="Khouri H.M."/>
            <person name="Kolonay J.F."/>
            <person name="Madupu R."/>
            <person name="Mohammoud Y."/>
            <person name="Nelson W.C."/>
            <person name="Radune D."/>
            <person name="Romero C.M."/>
            <person name="Sarria S."/>
            <person name="Selengut J."/>
            <person name="Shamblin C."/>
            <person name="Sullivan S.A."/>
            <person name="White O."/>
            <person name="Yu Y."/>
            <person name="Zafar N."/>
            <person name="Zhou L."/>
            <person name="Fraser C.M."/>
        </authorList>
    </citation>
    <scope>NUCLEOTIDE SEQUENCE [LARGE SCALE GENOMIC DNA]</scope>
    <source>
        <strain>ATCC 23344</strain>
    </source>
</reference>
<evidence type="ECO:0000255" key="1">
    <source>
        <dbReference type="HAMAP-Rule" id="MF_00268"/>
    </source>
</evidence>
<sequence>MEESKKGSGLTAEKSKALAAALAQIEKQFGKGSIMRLGDGEAVEDIQVVSTGSLGLDIALGVGGLPRGRVVEIYGPESSGKTTLTLQVIAEMQKLGGTAAFIDAEHALDVQYASKLGVNVPELLISQPDTGEQALEIVDALVRSGSIDMIVIDSVAALVPKAEIEGEMGDALPGLQARLMSQALRKLTGTIKRTNCLVIFINQIRMKIGVMFGNPETTTGGNALKFYSSVRLDIRRIGSIKKNDEVIGNETRVKVVKNKVSPPFREAIFDILYGEGISRQGEIIDLGVQAKIVDKAGAWYSYSGEKIGQGKDNAREFLRENPEIAREIENRIRESLGVAAMPQGAGSEAEIMDEEE</sequence>
<accession>Q62MH0</accession>
<name>RECA_BURMA</name>
<organism>
    <name type="scientific">Burkholderia mallei (strain ATCC 23344)</name>
    <dbReference type="NCBI Taxonomy" id="243160"/>
    <lineage>
        <taxon>Bacteria</taxon>
        <taxon>Pseudomonadati</taxon>
        <taxon>Pseudomonadota</taxon>
        <taxon>Betaproteobacteria</taxon>
        <taxon>Burkholderiales</taxon>
        <taxon>Burkholderiaceae</taxon>
        <taxon>Burkholderia</taxon>
        <taxon>pseudomallei group</taxon>
    </lineage>
</organism>
<keyword id="KW-0067">ATP-binding</keyword>
<keyword id="KW-0963">Cytoplasm</keyword>
<keyword id="KW-0227">DNA damage</keyword>
<keyword id="KW-0233">DNA recombination</keyword>
<keyword id="KW-0234">DNA repair</keyword>
<keyword id="KW-0238">DNA-binding</keyword>
<keyword id="KW-0547">Nucleotide-binding</keyword>
<keyword id="KW-1185">Reference proteome</keyword>
<keyword id="KW-0742">SOS response</keyword>
<dbReference type="EMBL" id="CP000010">
    <property type="protein sequence ID" value="AAU48734.1"/>
    <property type="molecule type" value="Genomic_DNA"/>
</dbReference>
<dbReference type="RefSeq" id="WP_004189458.1">
    <property type="nucleotide sequence ID" value="NC_006348.1"/>
</dbReference>
<dbReference type="RefSeq" id="YP_102098.1">
    <property type="nucleotide sequence ID" value="NC_006348.1"/>
</dbReference>
<dbReference type="SMR" id="Q62MH0"/>
<dbReference type="GeneID" id="93059269"/>
<dbReference type="KEGG" id="bma:BMA0272"/>
<dbReference type="PATRIC" id="fig|243160.12.peg.266"/>
<dbReference type="eggNOG" id="COG0468">
    <property type="taxonomic scope" value="Bacteria"/>
</dbReference>
<dbReference type="HOGENOM" id="CLU_040469_3_2_4"/>
<dbReference type="Proteomes" id="UP000006693">
    <property type="component" value="Chromosome 1"/>
</dbReference>
<dbReference type="GO" id="GO:0005829">
    <property type="term" value="C:cytosol"/>
    <property type="evidence" value="ECO:0007669"/>
    <property type="project" value="TreeGrafter"/>
</dbReference>
<dbReference type="GO" id="GO:0005524">
    <property type="term" value="F:ATP binding"/>
    <property type="evidence" value="ECO:0007669"/>
    <property type="project" value="UniProtKB-UniRule"/>
</dbReference>
<dbReference type="GO" id="GO:0016887">
    <property type="term" value="F:ATP hydrolysis activity"/>
    <property type="evidence" value="ECO:0007669"/>
    <property type="project" value="InterPro"/>
</dbReference>
<dbReference type="GO" id="GO:0140664">
    <property type="term" value="F:ATP-dependent DNA damage sensor activity"/>
    <property type="evidence" value="ECO:0007669"/>
    <property type="project" value="InterPro"/>
</dbReference>
<dbReference type="GO" id="GO:0003684">
    <property type="term" value="F:damaged DNA binding"/>
    <property type="evidence" value="ECO:0007669"/>
    <property type="project" value="UniProtKB-UniRule"/>
</dbReference>
<dbReference type="GO" id="GO:0003697">
    <property type="term" value="F:single-stranded DNA binding"/>
    <property type="evidence" value="ECO:0007669"/>
    <property type="project" value="UniProtKB-UniRule"/>
</dbReference>
<dbReference type="GO" id="GO:0006310">
    <property type="term" value="P:DNA recombination"/>
    <property type="evidence" value="ECO:0007669"/>
    <property type="project" value="UniProtKB-UniRule"/>
</dbReference>
<dbReference type="GO" id="GO:0006281">
    <property type="term" value="P:DNA repair"/>
    <property type="evidence" value="ECO:0007669"/>
    <property type="project" value="UniProtKB-UniRule"/>
</dbReference>
<dbReference type="GO" id="GO:0009432">
    <property type="term" value="P:SOS response"/>
    <property type="evidence" value="ECO:0007669"/>
    <property type="project" value="UniProtKB-UniRule"/>
</dbReference>
<dbReference type="CDD" id="cd00983">
    <property type="entry name" value="RecA"/>
    <property type="match status" value="1"/>
</dbReference>
<dbReference type="FunFam" id="3.40.50.300:FF:000087">
    <property type="entry name" value="Recombinase RecA"/>
    <property type="match status" value="1"/>
</dbReference>
<dbReference type="Gene3D" id="3.40.50.300">
    <property type="entry name" value="P-loop containing nucleotide triphosphate hydrolases"/>
    <property type="match status" value="1"/>
</dbReference>
<dbReference type="HAMAP" id="MF_00268">
    <property type="entry name" value="RecA"/>
    <property type="match status" value="1"/>
</dbReference>
<dbReference type="InterPro" id="IPR003593">
    <property type="entry name" value="AAA+_ATPase"/>
</dbReference>
<dbReference type="InterPro" id="IPR013765">
    <property type="entry name" value="DNA_recomb/repair_RecA"/>
</dbReference>
<dbReference type="InterPro" id="IPR020584">
    <property type="entry name" value="DNA_recomb/repair_RecA_CS"/>
</dbReference>
<dbReference type="InterPro" id="IPR027417">
    <property type="entry name" value="P-loop_NTPase"/>
</dbReference>
<dbReference type="InterPro" id="IPR049261">
    <property type="entry name" value="RecA-like_C"/>
</dbReference>
<dbReference type="InterPro" id="IPR049428">
    <property type="entry name" value="RecA-like_N"/>
</dbReference>
<dbReference type="InterPro" id="IPR020588">
    <property type="entry name" value="RecA_ATP-bd"/>
</dbReference>
<dbReference type="InterPro" id="IPR023400">
    <property type="entry name" value="RecA_C_sf"/>
</dbReference>
<dbReference type="InterPro" id="IPR020587">
    <property type="entry name" value="RecA_monomer-monomer_interface"/>
</dbReference>
<dbReference type="NCBIfam" id="TIGR02012">
    <property type="entry name" value="tigrfam_recA"/>
    <property type="match status" value="1"/>
</dbReference>
<dbReference type="PANTHER" id="PTHR45900:SF1">
    <property type="entry name" value="MITOCHONDRIAL DNA REPAIR PROTEIN RECA HOMOLOG-RELATED"/>
    <property type="match status" value="1"/>
</dbReference>
<dbReference type="PANTHER" id="PTHR45900">
    <property type="entry name" value="RECA"/>
    <property type="match status" value="1"/>
</dbReference>
<dbReference type="Pfam" id="PF00154">
    <property type="entry name" value="RecA"/>
    <property type="match status" value="1"/>
</dbReference>
<dbReference type="Pfam" id="PF21096">
    <property type="entry name" value="RecA_C"/>
    <property type="match status" value="1"/>
</dbReference>
<dbReference type="PRINTS" id="PR00142">
    <property type="entry name" value="RECA"/>
</dbReference>
<dbReference type="SMART" id="SM00382">
    <property type="entry name" value="AAA"/>
    <property type="match status" value="1"/>
</dbReference>
<dbReference type="SUPFAM" id="SSF52540">
    <property type="entry name" value="P-loop containing nucleoside triphosphate hydrolases"/>
    <property type="match status" value="1"/>
</dbReference>
<dbReference type="SUPFAM" id="SSF54752">
    <property type="entry name" value="RecA protein, C-terminal domain"/>
    <property type="match status" value="1"/>
</dbReference>
<dbReference type="PROSITE" id="PS00321">
    <property type="entry name" value="RECA_1"/>
    <property type="match status" value="1"/>
</dbReference>
<dbReference type="PROSITE" id="PS50162">
    <property type="entry name" value="RECA_2"/>
    <property type="match status" value="1"/>
</dbReference>
<dbReference type="PROSITE" id="PS50163">
    <property type="entry name" value="RECA_3"/>
    <property type="match status" value="1"/>
</dbReference>
<gene>
    <name evidence="1" type="primary">recA</name>
    <name type="ordered locus">BMA0272</name>
</gene>
<protein>
    <recommendedName>
        <fullName evidence="1">Protein RecA</fullName>
    </recommendedName>
    <alternativeName>
        <fullName evidence="1">Recombinase A</fullName>
    </alternativeName>
</protein>
<feature type="chain" id="PRO_0000122674" description="Protein RecA">
    <location>
        <begin position="1"/>
        <end position="356"/>
    </location>
</feature>
<feature type="binding site" evidence="1">
    <location>
        <begin position="75"/>
        <end position="82"/>
    </location>
    <ligand>
        <name>ATP</name>
        <dbReference type="ChEBI" id="CHEBI:30616"/>
    </ligand>
</feature>
<comment type="function">
    <text evidence="1">Can catalyze the hydrolysis of ATP in the presence of single-stranded DNA, the ATP-dependent uptake of single-stranded DNA by duplex DNA, and the ATP-dependent hybridization of homologous single-stranded DNAs. It interacts with LexA causing its activation and leading to its autocatalytic cleavage.</text>
</comment>
<comment type="subcellular location">
    <subcellularLocation>
        <location evidence="1">Cytoplasm</location>
    </subcellularLocation>
</comment>
<comment type="similarity">
    <text evidence="1">Belongs to the RecA family.</text>
</comment>